<name>BIOB_VIBC3</name>
<comment type="function">
    <text evidence="1">Catalyzes the conversion of dethiobiotin (DTB) to biotin by the insertion of a sulfur atom into dethiobiotin via a radical-based mechanism.</text>
</comment>
<comment type="catalytic activity">
    <reaction evidence="1">
        <text>(4R,5S)-dethiobiotin + (sulfur carrier)-SH + 2 reduced [2Fe-2S]-[ferredoxin] + 2 S-adenosyl-L-methionine = (sulfur carrier)-H + biotin + 2 5'-deoxyadenosine + 2 L-methionine + 2 oxidized [2Fe-2S]-[ferredoxin]</text>
        <dbReference type="Rhea" id="RHEA:22060"/>
        <dbReference type="Rhea" id="RHEA-COMP:10000"/>
        <dbReference type="Rhea" id="RHEA-COMP:10001"/>
        <dbReference type="Rhea" id="RHEA-COMP:14737"/>
        <dbReference type="Rhea" id="RHEA-COMP:14739"/>
        <dbReference type="ChEBI" id="CHEBI:17319"/>
        <dbReference type="ChEBI" id="CHEBI:29917"/>
        <dbReference type="ChEBI" id="CHEBI:33737"/>
        <dbReference type="ChEBI" id="CHEBI:33738"/>
        <dbReference type="ChEBI" id="CHEBI:57586"/>
        <dbReference type="ChEBI" id="CHEBI:57844"/>
        <dbReference type="ChEBI" id="CHEBI:59789"/>
        <dbReference type="ChEBI" id="CHEBI:64428"/>
        <dbReference type="ChEBI" id="CHEBI:149473"/>
        <dbReference type="EC" id="2.8.1.6"/>
    </reaction>
</comment>
<comment type="cofactor">
    <cofactor evidence="1">
        <name>[4Fe-4S] cluster</name>
        <dbReference type="ChEBI" id="CHEBI:49883"/>
    </cofactor>
    <text evidence="1">Binds 1 [4Fe-4S] cluster. The cluster is coordinated with 3 cysteines and an exchangeable S-adenosyl-L-methionine.</text>
</comment>
<comment type="cofactor">
    <cofactor evidence="1">
        <name>[2Fe-2S] cluster</name>
        <dbReference type="ChEBI" id="CHEBI:190135"/>
    </cofactor>
    <text evidence="1">Binds 1 [2Fe-2S] cluster. The cluster is coordinated with 3 cysteines and 1 arginine.</text>
</comment>
<comment type="pathway">
    <text evidence="1">Cofactor biosynthesis; biotin biosynthesis; biotin from 7,8-diaminononanoate: step 2/2.</text>
</comment>
<comment type="subunit">
    <text evidence="1">Homodimer.</text>
</comment>
<comment type="similarity">
    <text evidence="1">Belongs to the radical SAM superfamily. Biotin synthase family.</text>
</comment>
<proteinExistence type="inferred from homology"/>
<sequence>MEVRHNWTVAEVKALLDKPFMDLLFEAQQVHRLHHPHNHVQVSTLLSIKTGACPEDCKYCPQSAHYRTDVDKERLMEVERVLDAAQKAKNSGSTRFCMGAAWKNPKERDMPLLKEMIRGVKDMGLETCMTLGMLTPDQAQQLAQAGLDYYNHNLDTSPEFYGNIITTRTYQDRLDTLSHVRDAGMKICSGGIIGMGESTNDRAGLLVELANLPTHPESVPINMLVKVKGTPLEQVDDVEPFDFVRLIAVARIMMPKSAVRLSAGREKMNEQMQALCFMAGANSIFYGCKLLTTPNPAEDSDMLLFKKLGINREQVAQKPDEITENELLDRVVERVAARPTASDLFYDAAL</sequence>
<evidence type="ECO:0000255" key="1">
    <source>
        <dbReference type="HAMAP-Rule" id="MF_01694"/>
    </source>
</evidence>
<evidence type="ECO:0000255" key="2">
    <source>
        <dbReference type="PROSITE-ProRule" id="PRU01266"/>
    </source>
</evidence>
<organism>
    <name type="scientific">Vibrio cholerae serotype O1 (strain ATCC 39541 / Classical Ogawa 395 / O395)</name>
    <dbReference type="NCBI Taxonomy" id="345073"/>
    <lineage>
        <taxon>Bacteria</taxon>
        <taxon>Pseudomonadati</taxon>
        <taxon>Pseudomonadota</taxon>
        <taxon>Gammaproteobacteria</taxon>
        <taxon>Vibrionales</taxon>
        <taxon>Vibrionaceae</taxon>
        <taxon>Vibrio</taxon>
    </lineage>
</organism>
<protein>
    <recommendedName>
        <fullName evidence="1">Biotin synthase</fullName>
        <ecNumber evidence="1">2.8.1.6</ecNumber>
    </recommendedName>
</protein>
<accession>A5F2H3</accession>
<dbReference type="EC" id="2.8.1.6" evidence="1"/>
<dbReference type="EMBL" id="CP000627">
    <property type="protein sequence ID" value="ABQ19938.1"/>
    <property type="molecule type" value="Genomic_DNA"/>
</dbReference>
<dbReference type="EMBL" id="CP001235">
    <property type="protein sequence ID" value="ACP09137.1"/>
    <property type="molecule type" value="Genomic_DNA"/>
</dbReference>
<dbReference type="RefSeq" id="WP_000453785.1">
    <property type="nucleotide sequence ID" value="NZ_JAACZH010000005.1"/>
</dbReference>
<dbReference type="SMR" id="A5F2H3"/>
<dbReference type="GeneID" id="94014122"/>
<dbReference type="KEGG" id="vco:VC0395_A0630"/>
<dbReference type="KEGG" id="vcr:VC395_1127"/>
<dbReference type="PATRIC" id="fig|345073.21.peg.1094"/>
<dbReference type="eggNOG" id="COG0502">
    <property type="taxonomic scope" value="Bacteria"/>
</dbReference>
<dbReference type="HOGENOM" id="CLU_033172_1_2_6"/>
<dbReference type="OrthoDB" id="9786826at2"/>
<dbReference type="UniPathway" id="UPA00078">
    <property type="reaction ID" value="UER00162"/>
</dbReference>
<dbReference type="Proteomes" id="UP000000249">
    <property type="component" value="Chromosome 2"/>
</dbReference>
<dbReference type="GO" id="GO:0051537">
    <property type="term" value="F:2 iron, 2 sulfur cluster binding"/>
    <property type="evidence" value="ECO:0007669"/>
    <property type="project" value="UniProtKB-KW"/>
</dbReference>
<dbReference type="GO" id="GO:0051539">
    <property type="term" value="F:4 iron, 4 sulfur cluster binding"/>
    <property type="evidence" value="ECO:0007669"/>
    <property type="project" value="UniProtKB-KW"/>
</dbReference>
<dbReference type="GO" id="GO:0004076">
    <property type="term" value="F:biotin synthase activity"/>
    <property type="evidence" value="ECO:0007669"/>
    <property type="project" value="UniProtKB-UniRule"/>
</dbReference>
<dbReference type="GO" id="GO:0005506">
    <property type="term" value="F:iron ion binding"/>
    <property type="evidence" value="ECO:0007669"/>
    <property type="project" value="UniProtKB-UniRule"/>
</dbReference>
<dbReference type="GO" id="GO:0009102">
    <property type="term" value="P:biotin biosynthetic process"/>
    <property type="evidence" value="ECO:0007669"/>
    <property type="project" value="UniProtKB-UniRule"/>
</dbReference>
<dbReference type="CDD" id="cd01335">
    <property type="entry name" value="Radical_SAM"/>
    <property type="match status" value="1"/>
</dbReference>
<dbReference type="FunFam" id="3.20.20.70:FF:000011">
    <property type="entry name" value="Biotin synthase"/>
    <property type="match status" value="1"/>
</dbReference>
<dbReference type="Gene3D" id="3.20.20.70">
    <property type="entry name" value="Aldolase class I"/>
    <property type="match status" value="1"/>
</dbReference>
<dbReference type="HAMAP" id="MF_01694">
    <property type="entry name" value="BioB"/>
    <property type="match status" value="1"/>
</dbReference>
<dbReference type="InterPro" id="IPR013785">
    <property type="entry name" value="Aldolase_TIM"/>
</dbReference>
<dbReference type="InterPro" id="IPR010722">
    <property type="entry name" value="BATS_dom"/>
</dbReference>
<dbReference type="InterPro" id="IPR002684">
    <property type="entry name" value="Biotin_synth/BioAB"/>
</dbReference>
<dbReference type="InterPro" id="IPR024177">
    <property type="entry name" value="Biotin_synthase"/>
</dbReference>
<dbReference type="InterPro" id="IPR006638">
    <property type="entry name" value="Elp3/MiaA/NifB-like_rSAM"/>
</dbReference>
<dbReference type="InterPro" id="IPR007197">
    <property type="entry name" value="rSAM"/>
</dbReference>
<dbReference type="NCBIfam" id="TIGR00433">
    <property type="entry name" value="bioB"/>
    <property type="match status" value="1"/>
</dbReference>
<dbReference type="PANTHER" id="PTHR22976">
    <property type="entry name" value="BIOTIN SYNTHASE"/>
    <property type="match status" value="1"/>
</dbReference>
<dbReference type="PANTHER" id="PTHR22976:SF2">
    <property type="entry name" value="BIOTIN SYNTHASE, MITOCHONDRIAL"/>
    <property type="match status" value="1"/>
</dbReference>
<dbReference type="Pfam" id="PF06968">
    <property type="entry name" value="BATS"/>
    <property type="match status" value="1"/>
</dbReference>
<dbReference type="Pfam" id="PF04055">
    <property type="entry name" value="Radical_SAM"/>
    <property type="match status" value="1"/>
</dbReference>
<dbReference type="PIRSF" id="PIRSF001619">
    <property type="entry name" value="Biotin_synth"/>
    <property type="match status" value="1"/>
</dbReference>
<dbReference type="SFLD" id="SFLDF00272">
    <property type="entry name" value="biotin_synthase"/>
    <property type="match status" value="1"/>
</dbReference>
<dbReference type="SFLD" id="SFLDS00029">
    <property type="entry name" value="Radical_SAM"/>
    <property type="match status" value="1"/>
</dbReference>
<dbReference type="SMART" id="SM00876">
    <property type="entry name" value="BATS"/>
    <property type="match status" value="1"/>
</dbReference>
<dbReference type="SMART" id="SM00729">
    <property type="entry name" value="Elp3"/>
    <property type="match status" value="1"/>
</dbReference>
<dbReference type="SUPFAM" id="SSF102114">
    <property type="entry name" value="Radical SAM enzymes"/>
    <property type="match status" value="1"/>
</dbReference>
<dbReference type="PROSITE" id="PS51918">
    <property type="entry name" value="RADICAL_SAM"/>
    <property type="match status" value="1"/>
</dbReference>
<keyword id="KW-0001">2Fe-2S</keyword>
<keyword id="KW-0004">4Fe-4S</keyword>
<keyword id="KW-0093">Biotin biosynthesis</keyword>
<keyword id="KW-0408">Iron</keyword>
<keyword id="KW-0411">Iron-sulfur</keyword>
<keyword id="KW-0479">Metal-binding</keyword>
<keyword id="KW-0949">S-adenosyl-L-methionine</keyword>
<keyword id="KW-0808">Transferase</keyword>
<gene>
    <name evidence="1" type="primary">bioB</name>
    <name type="ordered locus">VC0395_A0630</name>
    <name type="ordered locus">VC395_1127</name>
</gene>
<reference key="1">
    <citation type="submission" date="2007-03" db="EMBL/GenBank/DDBJ databases">
        <authorList>
            <person name="Heidelberg J."/>
        </authorList>
    </citation>
    <scope>NUCLEOTIDE SEQUENCE [LARGE SCALE GENOMIC DNA]</scope>
    <source>
        <strain>ATCC 39541 / Classical Ogawa 395 / O395</strain>
    </source>
</reference>
<reference key="2">
    <citation type="journal article" date="2008" name="PLoS ONE">
        <title>A recalibrated molecular clock and independent origins for the cholera pandemic clones.</title>
        <authorList>
            <person name="Feng L."/>
            <person name="Reeves P.R."/>
            <person name="Lan R."/>
            <person name="Ren Y."/>
            <person name="Gao C."/>
            <person name="Zhou Z."/>
            <person name="Ren Y."/>
            <person name="Cheng J."/>
            <person name="Wang W."/>
            <person name="Wang J."/>
            <person name="Qian W."/>
            <person name="Li D."/>
            <person name="Wang L."/>
        </authorList>
    </citation>
    <scope>NUCLEOTIDE SEQUENCE [LARGE SCALE GENOMIC DNA]</scope>
    <source>
        <strain>ATCC 39541 / Classical Ogawa 395 / O395</strain>
    </source>
</reference>
<feature type="chain" id="PRO_0000381695" description="Biotin synthase">
    <location>
        <begin position="1"/>
        <end position="350"/>
    </location>
</feature>
<feature type="domain" description="Radical SAM core" evidence="2">
    <location>
        <begin position="38"/>
        <end position="256"/>
    </location>
</feature>
<feature type="binding site" evidence="1">
    <location>
        <position position="53"/>
    </location>
    <ligand>
        <name>[4Fe-4S] cluster</name>
        <dbReference type="ChEBI" id="CHEBI:49883"/>
        <note>4Fe-4S-S-AdoMet</note>
    </ligand>
</feature>
<feature type="binding site" evidence="1">
    <location>
        <position position="57"/>
    </location>
    <ligand>
        <name>[4Fe-4S] cluster</name>
        <dbReference type="ChEBI" id="CHEBI:49883"/>
        <note>4Fe-4S-S-AdoMet</note>
    </ligand>
</feature>
<feature type="binding site" evidence="1">
    <location>
        <position position="60"/>
    </location>
    <ligand>
        <name>[4Fe-4S] cluster</name>
        <dbReference type="ChEBI" id="CHEBI:49883"/>
        <note>4Fe-4S-S-AdoMet</note>
    </ligand>
</feature>
<feature type="binding site" evidence="1">
    <location>
        <position position="97"/>
    </location>
    <ligand>
        <name>[2Fe-2S] cluster</name>
        <dbReference type="ChEBI" id="CHEBI:190135"/>
    </ligand>
</feature>
<feature type="binding site" evidence="1">
    <location>
        <position position="128"/>
    </location>
    <ligand>
        <name>[2Fe-2S] cluster</name>
        <dbReference type="ChEBI" id="CHEBI:190135"/>
    </ligand>
</feature>
<feature type="binding site" evidence="1">
    <location>
        <position position="188"/>
    </location>
    <ligand>
        <name>[2Fe-2S] cluster</name>
        <dbReference type="ChEBI" id="CHEBI:190135"/>
    </ligand>
</feature>
<feature type="binding site" evidence="1">
    <location>
        <position position="260"/>
    </location>
    <ligand>
        <name>[2Fe-2S] cluster</name>
        <dbReference type="ChEBI" id="CHEBI:190135"/>
    </ligand>
</feature>